<evidence type="ECO:0000255" key="1"/>
<evidence type="ECO:0000255" key="2">
    <source>
        <dbReference type="PROSITE-ProRule" id="PRU01118"/>
    </source>
</evidence>
<evidence type="ECO:0000269" key="3">
    <source>
    </source>
</evidence>
<evidence type="ECO:0000303" key="4">
    <source>
    </source>
</evidence>
<evidence type="ECO:0000303" key="5">
    <source>
    </source>
</evidence>
<evidence type="ECO:0000305" key="6"/>
<evidence type="ECO:0007744" key="7">
    <source>
    </source>
</evidence>
<proteinExistence type="evidence at protein level"/>
<sequence length="306" mass="34538">MAGRHQNRSFPLPGVQSSGQVHAFGNCSDSDILEEDAEVYELRSRGKEKVRRSTSRDRLDDIIVLTKDIQEGDTLNAIALQYCCTVADIKRVNNLISDQDFFALRSIKIPVKKFSSLTETLCPPKGRQTSRHSSVQYSSEQQEILPANDSLAYSDSAGSFLKEVDRDIEQIVKCTDNKRENLNEVVSALTAQQMRFEPDNKNTQRKDPYYGADWGIGWWTAVVIMLIVGIITPVFYLLYYEILAKVDVSHHSTVDSSHLHSKITPPSQQREMENGIVPTKGIHFSQQDDHKLYSQDSQSPAAQQET</sequence>
<dbReference type="EMBL" id="AL137315">
    <property type="protein sequence ID" value="CAB70692.1"/>
    <property type="molecule type" value="mRNA"/>
</dbReference>
<dbReference type="EMBL" id="BX537972">
    <property type="protein sequence ID" value="CAD97936.1"/>
    <property type="status" value="ALT_INIT"/>
    <property type="molecule type" value="mRNA"/>
</dbReference>
<dbReference type="EMBL" id="CR933624">
    <property type="protein sequence ID" value="CAI45934.1"/>
    <property type="molecule type" value="mRNA"/>
</dbReference>
<dbReference type="EMBL" id="BC058027">
    <property type="protein sequence ID" value="AAH58027.1"/>
    <property type="molecule type" value="mRNA"/>
</dbReference>
<dbReference type="CCDS" id="CCDS43338.1">
    <molecule id="Q7Z3D4-1"/>
</dbReference>
<dbReference type="CCDS" id="CCDS68911.1">
    <molecule id="Q7Z3D4-2"/>
</dbReference>
<dbReference type="PIR" id="T46287">
    <property type="entry name" value="T46287"/>
</dbReference>
<dbReference type="RefSeq" id="NP_001273741.1">
    <molecule id="Q7Z3D4-2"/>
    <property type="nucleotide sequence ID" value="NM_001286812.1"/>
</dbReference>
<dbReference type="RefSeq" id="NP_938014.1">
    <molecule id="Q7Z3D4-1"/>
    <property type="nucleotide sequence ID" value="NM_198273.2"/>
</dbReference>
<dbReference type="RefSeq" id="XP_005248478.1">
    <property type="nucleotide sequence ID" value="XM_005248421.4"/>
</dbReference>
<dbReference type="SMR" id="Q7Z3D4"/>
<dbReference type="BioGRID" id="125469">
    <property type="interactions" value="21"/>
</dbReference>
<dbReference type="FunCoup" id="Q7Z3D4">
    <property type="interactions" value="1792"/>
</dbReference>
<dbReference type="IntAct" id="Q7Z3D4">
    <property type="interactions" value="5"/>
</dbReference>
<dbReference type="STRING" id="9606.ENSP00000314518"/>
<dbReference type="GlyCosmos" id="Q7Z3D4">
    <property type="glycosylation" value="2 sites, 1 glycan"/>
</dbReference>
<dbReference type="GlyGen" id="Q7Z3D4">
    <property type="glycosylation" value="8 sites, 2 O-linked glycans (7 sites)"/>
</dbReference>
<dbReference type="iPTMnet" id="Q7Z3D4"/>
<dbReference type="PhosphoSitePlus" id="Q7Z3D4"/>
<dbReference type="BioMuta" id="LYSMD3"/>
<dbReference type="DMDM" id="114150022"/>
<dbReference type="jPOST" id="Q7Z3D4"/>
<dbReference type="MassIVE" id="Q7Z3D4"/>
<dbReference type="PaxDb" id="9606-ENSP00000314518"/>
<dbReference type="PeptideAtlas" id="Q7Z3D4"/>
<dbReference type="ProteomicsDB" id="69029">
    <molecule id="Q7Z3D4-1"/>
</dbReference>
<dbReference type="ProteomicsDB" id="69030">
    <molecule id="Q7Z3D4-2"/>
</dbReference>
<dbReference type="ProteomicsDB" id="69031">
    <molecule id="Q7Z3D4-3"/>
</dbReference>
<dbReference type="Pumba" id="Q7Z3D4"/>
<dbReference type="Antibodypedia" id="2640">
    <property type="antibodies" value="48 antibodies from 16 providers"/>
</dbReference>
<dbReference type="DNASU" id="116068"/>
<dbReference type="Ensembl" id="ENST00000315948.11">
    <molecule id="Q7Z3D4-1"/>
    <property type="protein sequence ID" value="ENSP00000314518.6"/>
    <property type="gene ID" value="ENSG00000176018.13"/>
</dbReference>
<dbReference type="Ensembl" id="ENST00000500869.6">
    <molecule id="Q7Z3D4-3"/>
    <property type="protein sequence ID" value="ENSP00000427020.1"/>
    <property type="gene ID" value="ENSG00000176018.13"/>
</dbReference>
<dbReference type="Ensembl" id="ENST00000509384.5">
    <molecule id="Q7Z3D4-2"/>
    <property type="protein sequence ID" value="ENSP00000427683.1"/>
    <property type="gene ID" value="ENSG00000176018.13"/>
</dbReference>
<dbReference type="GeneID" id="116068"/>
<dbReference type="KEGG" id="hsa:116068"/>
<dbReference type="MANE-Select" id="ENST00000315948.11">
    <property type="protein sequence ID" value="ENSP00000314518.6"/>
    <property type="RefSeq nucleotide sequence ID" value="NM_198273.2"/>
    <property type="RefSeq protein sequence ID" value="NP_938014.1"/>
</dbReference>
<dbReference type="UCSC" id="uc003kjr.5">
    <molecule id="Q7Z3D4-1"/>
    <property type="organism name" value="human"/>
</dbReference>
<dbReference type="AGR" id="HGNC:26969"/>
<dbReference type="CTD" id="116068"/>
<dbReference type="DisGeNET" id="116068"/>
<dbReference type="GeneCards" id="LYSMD3"/>
<dbReference type="HGNC" id="HGNC:26969">
    <property type="gene designation" value="LYSMD3"/>
</dbReference>
<dbReference type="HPA" id="ENSG00000176018">
    <property type="expression patterns" value="Low tissue specificity"/>
</dbReference>
<dbReference type="neXtProt" id="NX_Q7Z3D4"/>
<dbReference type="OpenTargets" id="ENSG00000176018"/>
<dbReference type="PharmGKB" id="PA142671495"/>
<dbReference type="VEuPathDB" id="HostDB:ENSG00000176018"/>
<dbReference type="eggNOG" id="KOG2850">
    <property type="taxonomic scope" value="Eukaryota"/>
</dbReference>
<dbReference type="GeneTree" id="ENSGT00940000158711"/>
<dbReference type="HOGENOM" id="CLU_1739900_0_0_1"/>
<dbReference type="InParanoid" id="Q7Z3D4"/>
<dbReference type="OMA" id="IALQFCC"/>
<dbReference type="OrthoDB" id="538216at2759"/>
<dbReference type="PAN-GO" id="Q7Z3D4">
    <property type="GO annotations" value="2 GO annotations based on evolutionary models"/>
</dbReference>
<dbReference type="PhylomeDB" id="Q7Z3D4"/>
<dbReference type="TreeFam" id="TF326271"/>
<dbReference type="PathwayCommons" id="Q7Z3D4"/>
<dbReference type="SignaLink" id="Q7Z3D4"/>
<dbReference type="BioGRID-ORCS" id="116068">
    <property type="hits" value="15 hits in 1143 CRISPR screens"/>
</dbReference>
<dbReference type="GeneWiki" id="LYSMD3"/>
<dbReference type="GenomeRNAi" id="116068"/>
<dbReference type="Pharos" id="Q7Z3D4">
    <property type="development level" value="Tdark"/>
</dbReference>
<dbReference type="PRO" id="PR:Q7Z3D4"/>
<dbReference type="Proteomes" id="UP000005640">
    <property type="component" value="Chromosome 5"/>
</dbReference>
<dbReference type="RNAct" id="Q7Z3D4">
    <property type="molecule type" value="protein"/>
</dbReference>
<dbReference type="Bgee" id="ENSG00000176018">
    <property type="expression patterns" value="Expressed in parietal pleura and 178 other cell types or tissues"/>
</dbReference>
<dbReference type="ExpressionAtlas" id="Q7Z3D4">
    <property type="expression patterns" value="baseline and differential"/>
</dbReference>
<dbReference type="GO" id="GO:0005794">
    <property type="term" value="C:Golgi apparatus"/>
    <property type="evidence" value="ECO:0000314"/>
    <property type="project" value="UniProtKB"/>
</dbReference>
<dbReference type="GO" id="GO:0000139">
    <property type="term" value="C:Golgi membrane"/>
    <property type="evidence" value="ECO:0000314"/>
    <property type="project" value="FlyBase"/>
</dbReference>
<dbReference type="GO" id="GO:0005886">
    <property type="term" value="C:plasma membrane"/>
    <property type="evidence" value="ECO:0000314"/>
    <property type="project" value="UniProtKB"/>
</dbReference>
<dbReference type="GO" id="GO:0042834">
    <property type="term" value="F:peptidoglycan binding"/>
    <property type="evidence" value="ECO:0000314"/>
    <property type="project" value="FlyBase"/>
</dbReference>
<dbReference type="GO" id="GO:0007030">
    <property type="term" value="P:Golgi organization"/>
    <property type="evidence" value="ECO:0000315"/>
    <property type="project" value="UniProtKB"/>
</dbReference>
<dbReference type="CDD" id="cd00118">
    <property type="entry name" value="LysM"/>
    <property type="match status" value="1"/>
</dbReference>
<dbReference type="Gene3D" id="3.10.350.10">
    <property type="entry name" value="LysM domain"/>
    <property type="match status" value="1"/>
</dbReference>
<dbReference type="InterPro" id="IPR045030">
    <property type="entry name" value="LYSM1-4"/>
</dbReference>
<dbReference type="InterPro" id="IPR018392">
    <property type="entry name" value="LysM_dom"/>
</dbReference>
<dbReference type="InterPro" id="IPR036779">
    <property type="entry name" value="LysM_dom_sf"/>
</dbReference>
<dbReference type="PANTHER" id="PTHR20932:SF5">
    <property type="entry name" value="AND PUTATIVE PEPTIDOGLYCAN-BINDING DOMAIN-CONTAINING PROTEIN 3-RELATED"/>
    <property type="match status" value="1"/>
</dbReference>
<dbReference type="PANTHER" id="PTHR20932">
    <property type="entry name" value="LYSM AND PUTATIVE PEPTIDOGLYCAN-BINDING DOMAIN-CONTAINING PROTEIN"/>
    <property type="match status" value="1"/>
</dbReference>
<dbReference type="Pfam" id="PF01476">
    <property type="entry name" value="LysM"/>
    <property type="match status" value="1"/>
</dbReference>
<dbReference type="SMART" id="SM00257">
    <property type="entry name" value="LysM"/>
    <property type="match status" value="1"/>
</dbReference>
<dbReference type="SUPFAM" id="SSF54106">
    <property type="entry name" value="LysM domain"/>
    <property type="match status" value="1"/>
</dbReference>
<dbReference type="PROSITE" id="PS51782">
    <property type="entry name" value="LYSM"/>
    <property type="match status" value="1"/>
</dbReference>
<organism>
    <name type="scientific">Homo sapiens</name>
    <name type="common">Human</name>
    <dbReference type="NCBI Taxonomy" id="9606"/>
    <lineage>
        <taxon>Eukaryota</taxon>
        <taxon>Metazoa</taxon>
        <taxon>Chordata</taxon>
        <taxon>Craniata</taxon>
        <taxon>Vertebrata</taxon>
        <taxon>Euteleostomi</taxon>
        <taxon>Mammalia</taxon>
        <taxon>Eutheria</taxon>
        <taxon>Euarchontoglires</taxon>
        <taxon>Primates</taxon>
        <taxon>Haplorrhini</taxon>
        <taxon>Catarrhini</taxon>
        <taxon>Hominidae</taxon>
        <taxon>Homo</taxon>
    </lineage>
</organism>
<comment type="function">
    <text evidence="3">Essential for Golgi structural integrity.</text>
</comment>
<comment type="subcellular location">
    <subcellularLocation>
        <location evidence="3">Cell membrane</location>
        <topology evidence="1">Single-pass membrane protein</topology>
    </subcellularLocation>
    <subcellularLocation>
        <location evidence="3">Golgi apparatus</location>
    </subcellularLocation>
</comment>
<comment type="alternative products">
    <event type="alternative splicing"/>
    <isoform>
        <id>Q7Z3D4-1</id>
        <name>1</name>
        <sequence type="displayed"/>
    </isoform>
    <isoform>
        <id>Q7Z3D4-2</id>
        <name>2</name>
        <sequence type="described" ref="VSP_020126 VSP_020127"/>
    </isoform>
    <isoform>
        <id>Q7Z3D4-3</id>
        <name>3</name>
        <sequence type="described" ref="VSP_020125 VSP_020128"/>
    </isoform>
</comment>
<comment type="induction">
    <text evidence="3">Up-regulated by Golgi stress-inducing agent nigericin.</text>
</comment>
<comment type="sequence caution" evidence="6">
    <conflict type="erroneous initiation">
        <sequence resource="EMBL-CDS" id="CAD97936"/>
    </conflict>
</comment>
<gene>
    <name type="primary">LYSMD3</name>
</gene>
<accession>Q7Z3D4</accession>
<accession>Q5H9U0</accession>
<accession>Q6PEK0</accession>
<accession>Q9NTE9</accession>
<name>LYSM3_HUMAN</name>
<protein>
    <recommendedName>
        <fullName>LysM and putative peptidoglycan-binding domain-containing protein 3</fullName>
    </recommendedName>
</protein>
<feature type="chain" id="PRO_0000248007" description="LysM and putative peptidoglycan-binding domain-containing protein 3">
    <location>
        <begin position="1"/>
        <end position="306"/>
    </location>
</feature>
<feature type="topological domain" description="Extracellular" evidence="1">
    <location>
        <begin position="1"/>
        <end position="217"/>
    </location>
</feature>
<feature type="transmembrane region" description="Helical" evidence="1">
    <location>
        <begin position="218"/>
        <end position="238"/>
    </location>
</feature>
<feature type="topological domain" description="Cytoplasmic" evidence="1">
    <location>
        <begin position="239"/>
        <end position="306"/>
    </location>
</feature>
<feature type="domain" description="LysM" evidence="2">
    <location>
        <begin position="65"/>
        <end position="109"/>
    </location>
</feature>
<feature type="modified residue" description="Phosphoserine" evidence="7">
    <location>
        <position position="55"/>
    </location>
</feature>
<feature type="glycosylation site" description="N-linked (GlcNAc...) asparagine" evidence="1">
    <location>
        <position position="7"/>
    </location>
</feature>
<feature type="splice variant" id="VSP_020125" description="In isoform 3." evidence="5">
    <original>VADIKRVNNLISDQDFFALRSIKIPVKKFSSLTETLCPPKGRQTSRHSSVQYSSEQQEILPANDS</original>
    <variation>LRWMLVIIQQWTLHIYIQKSHPHHSREKWKMELCQLKEYISANKMIINCIVKILSHLLLNRKHSN</variation>
    <location>
        <begin position="86"/>
        <end position="150"/>
    </location>
</feature>
<feature type="splice variant" id="VSP_020126" description="In isoform 2." evidence="4">
    <original>ADIKRVNNLISDQDFFALRSIKIPVKKFSSLTETLCPPKGR</original>
    <variation>YQNSSKKVQFLDRNTLSSKRKTDFTSFICSILFRTTGNFAS</variation>
    <location>
        <begin position="87"/>
        <end position="127"/>
    </location>
</feature>
<feature type="splice variant" id="VSP_020127" description="In isoform 2." evidence="4">
    <location>
        <begin position="128"/>
        <end position="306"/>
    </location>
</feature>
<feature type="splice variant" id="VSP_020128" description="In isoform 3." evidence="5">
    <location>
        <begin position="151"/>
        <end position="306"/>
    </location>
</feature>
<reference key="1">
    <citation type="journal article" date="2007" name="BMC Genomics">
        <title>The full-ORF clone resource of the German cDNA consortium.</title>
        <authorList>
            <person name="Bechtel S."/>
            <person name="Rosenfelder H."/>
            <person name="Duda A."/>
            <person name="Schmidt C.P."/>
            <person name="Ernst U."/>
            <person name="Wellenreuther R."/>
            <person name="Mehrle A."/>
            <person name="Schuster C."/>
            <person name="Bahr A."/>
            <person name="Bloecker H."/>
            <person name="Heubner D."/>
            <person name="Hoerlein A."/>
            <person name="Michel G."/>
            <person name="Wedler H."/>
            <person name="Koehrer K."/>
            <person name="Ottenwaelder B."/>
            <person name="Poustka A."/>
            <person name="Wiemann S."/>
            <person name="Schupp I."/>
        </authorList>
    </citation>
    <scope>NUCLEOTIDE SEQUENCE [LARGE SCALE MRNA] (ISOFORMS 1 AND 3)</scope>
    <source>
        <tissue>Mammary cancer</tissue>
        <tissue>Retina</tissue>
        <tissue>Testis</tissue>
    </source>
</reference>
<reference key="2">
    <citation type="journal article" date="2004" name="Genome Res.">
        <title>The status, quality, and expansion of the NIH full-length cDNA project: the Mammalian Gene Collection (MGC).</title>
        <authorList>
            <consortium name="The MGC Project Team"/>
        </authorList>
    </citation>
    <scope>NUCLEOTIDE SEQUENCE [LARGE SCALE MRNA] (ISOFORM 2)</scope>
    <source>
        <tissue>Kidney</tissue>
    </source>
</reference>
<reference key="3">
    <citation type="journal article" date="2008" name="Proc. Natl. Acad. Sci. U.S.A.">
        <title>A quantitative atlas of mitotic phosphorylation.</title>
        <authorList>
            <person name="Dephoure N."/>
            <person name="Zhou C."/>
            <person name="Villen J."/>
            <person name="Beausoleil S.A."/>
            <person name="Bakalarski C.E."/>
            <person name="Elledge S.J."/>
            <person name="Gygi S.P."/>
        </authorList>
    </citation>
    <scope>IDENTIFICATION BY MASS SPECTROMETRY [LARGE SCALE ANALYSIS]</scope>
    <source>
        <tissue>Cervix carcinoma</tissue>
    </source>
</reference>
<reference key="4">
    <citation type="journal article" date="2013" name="J. Proteome Res.">
        <title>Toward a comprehensive characterization of a human cancer cell phosphoproteome.</title>
        <authorList>
            <person name="Zhou H."/>
            <person name="Di Palma S."/>
            <person name="Preisinger C."/>
            <person name="Peng M."/>
            <person name="Polat A.N."/>
            <person name="Heck A.J."/>
            <person name="Mohammed S."/>
        </authorList>
    </citation>
    <scope>PHOSPHORYLATION [LARGE SCALE ANALYSIS] AT SER-55</scope>
    <scope>IDENTIFICATION BY MASS SPECTROMETRY [LARGE SCALE ANALYSIS]</scope>
    <source>
        <tissue>Cervix carcinoma</tissue>
        <tissue>Erythroleukemia</tissue>
    </source>
</reference>
<reference key="5">
    <citation type="journal article" date="2018" name="Mol. Biol. Cell">
        <title>Targeted protein unfolding uncovers a Golgi-specific transcriptional stress response.</title>
        <authorList>
            <person name="Serebrenik Y.V."/>
            <person name="Hellerschmied D."/>
            <person name="Toure M."/>
            <person name="Lopez-Giraldez F."/>
            <person name="Brookner D."/>
            <person name="Crews C.M."/>
        </authorList>
    </citation>
    <scope>FUNCTION</scope>
    <scope>SUBCELLULAR LOCATION</scope>
</reference>
<keyword id="KW-0025">Alternative splicing</keyword>
<keyword id="KW-1003">Cell membrane</keyword>
<keyword id="KW-0325">Glycoprotein</keyword>
<keyword id="KW-0333">Golgi apparatus</keyword>
<keyword id="KW-0472">Membrane</keyword>
<keyword id="KW-0597">Phosphoprotein</keyword>
<keyword id="KW-1267">Proteomics identification</keyword>
<keyword id="KW-1185">Reference proteome</keyword>
<keyword id="KW-0812">Transmembrane</keyword>
<keyword id="KW-1133">Transmembrane helix</keyword>